<accession>P12045</accession>
<feature type="chain" id="PRO_0000074994" description="N5-carboxyaminoimidazole ribonucleotide synthase">
    <location>
        <begin position="1"/>
        <end position="380"/>
    </location>
</feature>
<feature type="domain" description="ATP-grasp" evidence="1">
    <location>
        <begin position="112"/>
        <end position="298"/>
    </location>
</feature>
<feature type="binding site" evidence="1">
    <location>
        <position position="108"/>
    </location>
    <ligand>
        <name>ATP</name>
        <dbReference type="ChEBI" id="CHEBI:30616"/>
    </ligand>
</feature>
<feature type="binding site" evidence="1">
    <location>
        <position position="148"/>
    </location>
    <ligand>
        <name>ATP</name>
        <dbReference type="ChEBI" id="CHEBI:30616"/>
    </ligand>
</feature>
<feature type="binding site" evidence="1">
    <location>
        <begin position="153"/>
        <end position="159"/>
    </location>
    <ligand>
        <name>ATP</name>
        <dbReference type="ChEBI" id="CHEBI:30616"/>
    </ligand>
</feature>
<feature type="binding site" evidence="1">
    <location>
        <begin position="183"/>
        <end position="186"/>
    </location>
    <ligand>
        <name>ATP</name>
        <dbReference type="ChEBI" id="CHEBI:30616"/>
    </ligand>
</feature>
<feature type="binding site" evidence="1">
    <location>
        <position position="191"/>
    </location>
    <ligand>
        <name>ATP</name>
        <dbReference type="ChEBI" id="CHEBI:30616"/>
    </ligand>
</feature>
<feature type="binding site" evidence="1">
    <location>
        <position position="214"/>
    </location>
    <ligand>
        <name>ATP</name>
        <dbReference type="ChEBI" id="CHEBI:30616"/>
    </ligand>
</feature>
<feature type="binding site" evidence="1">
    <location>
        <begin position="268"/>
        <end position="269"/>
    </location>
    <ligand>
        <name>ATP</name>
        <dbReference type="ChEBI" id="CHEBI:30616"/>
    </ligand>
</feature>
<feature type="sequence conflict" description="In Ref. 1; AAA22675." evidence="2" ref="1">
    <location>
        <position position="227"/>
    </location>
</feature>
<dbReference type="EC" id="6.3.4.18" evidence="1"/>
<dbReference type="EMBL" id="J02732">
    <property type="protein sequence ID" value="AAA22675.1"/>
    <property type="molecule type" value="Genomic_DNA"/>
</dbReference>
<dbReference type="EMBL" id="AL009126">
    <property type="protein sequence ID" value="CAB12463.2"/>
    <property type="molecule type" value="Genomic_DNA"/>
</dbReference>
<dbReference type="PIR" id="B29326">
    <property type="entry name" value="DCBSPK"/>
</dbReference>
<dbReference type="RefSeq" id="NP_388525.2">
    <property type="nucleotide sequence ID" value="NC_000964.3"/>
</dbReference>
<dbReference type="RefSeq" id="WP_009966735.1">
    <property type="nucleotide sequence ID" value="NZ_OZ025638.1"/>
</dbReference>
<dbReference type="SMR" id="P12045"/>
<dbReference type="FunCoup" id="P12045">
    <property type="interactions" value="424"/>
</dbReference>
<dbReference type="STRING" id="224308.BSU06430"/>
<dbReference type="jPOST" id="P12045"/>
<dbReference type="PaxDb" id="224308-BSU06430"/>
<dbReference type="EnsemblBacteria" id="CAB12463">
    <property type="protein sequence ID" value="CAB12463"/>
    <property type="gene ID" value="BSU_06430"/>
</dbReference>
<dbReference type="GeneID" id="936039"/>
<dbReference type="KEGG" id="bsu:BSU06430"/>
<dbReference type="PATRIC" id="fig|224308.179.peg.699"/>
<dbReference type="eggNOG" id="COG0026">
    <property type="taxonomic scope" value="Bacteria"/>
</dbReference>
<dbReference type="InParanoid" id="P12045"/>
<dbReference type="OrthoDB" id="9804625at2"/>
<dbReference type="PhylomeDB" id="P12045"/>
<dbReference type="BioCyc" id="BSUB:BSU06430-MONOMER"/>
<dbReference type="UniPathway" id="UPA00074">
    <property type="reaction ID" value="UER00942"/>
</dbReference>
<dbReference type="Proteomes" id="UP000001570">
    <property type="component" value="Chromosome"/>
</dbReference>
<dbReference type="GO" id="GO:0005829">
    <property type="term" value="C:cytosol"/>
    <property type="evidence" value="ECO:0000318"/>
    <property type="project" value="GO_Central"/>
</dbReference>
<dbReference type="GO" id="GO:0034028">
    <property type="term" value="F:5-(carboxyamino)imidazole ribonucleotide synthase activity"/>
    <property type="evidence" value="ECO:0007669"/>
    <property type="project" value="UniProtKB-UniRule"/>
</dbReference>
<dbReference type="GO" id="GO:0005524">
    <property type="term" value="F:ATP binding"/>
    <property type="evidence" value="ECO:0007669"/>
    <property type="project" value="UniProtKB-KW"/>
</dbReference>
<dbReference type="GO" id="GO:0046872">
    <property type="term" value="F:metal ion binding"/>
    <property type="evidence" value="ECO:0007669"/>
    <property type="project" value="InterPro"/>
</dbReference>
<dbReference type="GO" id="GO:0004638">
    <property type="term" value="F:phosphoribosylaminoimidazole carboxylase activity"/>
    <property type="evidence" value="ECO:0007669"/>
    <property type="project" value="InterPro"/>
</dbReference>
<dbReference type="GO" id="GO:0006189">
    <property type="term" value="P:'de novo' IMP biosynthetic process"/>
    <property type="evidence" value="ECO:0007669"/>
    <property type="project" value="UniProtKB-UniRule"/>
</dbReference>
<dbReference type="FunFam" id="3.30.1490.20:FF:000015">
    <property type="entry name" value="N5-carboxyaminoimidazole ribonucleotide synthase"/>
    <property type="match status" value="1"/>
</dbReference>
<dbReference type="FunFam" id="3.30.470.20:FF:000029">
    <property type="entry name" value="N5-carboxyaminoimidazole ribonucleotide synthase"/>
    <property type="match status" value="1"/>
</dbReference>
<dbReference type="FunFam" id="3.40.50.20:FF:000016">
    <property type="entry name" value="N5-carboxyaminoimidazole ribonucleotide synthase"/>
    <property type="match status" value="1"/>
</dbReference>
<dbReference type="Gene3D" id="3.40.50.20">
    <property type="match status" value="1"/>
</dbReference>
<dbReference type="Gene3D" id="3.30.1490.20">
    <property type="entry name" value="ATP-grasp fold, A domain"/>
    <property type="match status" value="1"/>
</dbReference>
<dbReference type="Gene3D" id="3.30.470.20">
    <property type="entry name" value="ATP-grasp fold, B domain"/>
    <property type="match status" value="1"/>
</dbReference>
<dbReference type="HAMAP" id="MF_01928">
    <property type="entry name" value="PurK"/>
    <property type="match status" value="1"/>
</dbReference>
<dbReference type="InterPro" id="IPR011761">
    <property type="entry name" value="ATP-grasp"/>
</dbReference>
<dbReference type="InterPro" id="IPR003135">
    <property type="entry name" value="ATP-grasp_carboxylate-amine"/>
</dbReference>
<dbReference type="InterPro" id="IPR013815">
    <property type="entry name" value="ATP_grasp_subdomain_1"/>
</dbReference>
<dbReference type="InterPro" id="IPR016185">
    <property type="entry name" value="PreATP-grasp_dom_sf"/>
</dbReference>
<dbReference type="InterPro" id="IPR005875">
    <property type="entry name" value="PurK"/>
</dbReference>
<dbReference type="InterPro" id="IPR040686">
    <property type="entry name" value="PurK_C"/>
</dbReference>
<dbReference type="InterPro" id="IPR054350">
    <property type="entry name" value="PurT/PurK_preATP-grasp"/>
</dbReference>
<dbReference type="InterPro" id="IPR011054">
    <property type="entry name" value="Rudment_hybrid_motif"/>
</dbReference>
<dbReference type="NCBIfam" id="NF004675">
    <property type="entry name" value="PRK06019.1-1"/>
    <property type="match status" value="1"/>
</dbReference>
<dbReference type="NCBIfam" id="NF004676">
    <property type="entry name" value="PRK06019.1-2"/>
    <property type="match status" value="1"/>
</dbReference>
<dbReference type="NCBIfam" id="NF004679">
    <property type="entry name" value="PRK06019.1-5"/>
    <property type="match status" value="1"/>
</dbReference>
<dbReference type="NCBIfam" id="TIGR01161">
    <property type="entry name" value="purK"/>
    <property type="match status" value="1"/>
</dbReference>
<dbReference type="PANTHER" id="PTHR11609:SF5">
    <property type="entry name" value="PHOSPHORIBOSYLAMINOIMIDAZOLE CARBOXYLASE"/>
    <property type="match status" value="1"/>
</dbReference>
<dbReference type="PANTHER" id="PTHR11609">
    <property type="entry name" value="PURINE BIOSYNTHESIS PROTEIN 6/7, PUR6/7"/>
    <property type="match status" value="1"/>
</dbReference>
<dbReference type="Pfam" id="PF02222">
    <property type="entry name" value="ATP-grasp"/>
    <property type="match status" value="1"/>
</dbReference>
<dbReference type="Pfam" id="PF17769">
    <property type="entry name" value="PurK_C"/>
    <property type="match status" value="1"/>
</dbReference>
<dbReference type="Pfam" id="PF22660">
    <property type="entry name" value="RS_preATP-grasp-like"/>
    <property type="match status" value="1"/>
</dbReference>
<dbReference type="SUPFAM" id="SSF56059">
    <property type="entry name" value="Glutathione synthetase ATP-binding domain-like"/>
    <property type="match status" value="1"/>
</dbReference>
<dbReference type="SUPFAM" id="SSF52440">
    <property type="entry name" value="PreATP-grasp domain"/>
    <property type="match status" value="1"/>
</dbReference>
<dbReference type="SUPFAM" id="SSF51246">
    <property type="entry name" value="Rudiment single hybrid motif"/>
    <property type="match status" value="1"/>
</dbReference>
<dbReference type="PROSITE" id="PS50975">
    <property type="entry name" value="ATP_GRASP"/>
    <property type="match status" value="1"/>
</dbReference>
<reference key="1">
    <citation type="journal article" date="1987" name="J. Biol. Chem.">
        <title>Cloning and characterization of a 12-gene cluster from Bacillus subtilis encoding nine enzymes for de novo purine nucleotide synthesis.</title>
        <authorList>
            <person name="Ebbole D.J."/>
            <person name="Zalkin H."/>
        </authorList>
    </citation>
    <scope>NUCLEOTIDE SEQUENCE [GENOMIC DNA]</scope>
</reference>
<reference key="2">
    <citation type="journal article" date="1997" name="Nature">
        <title>The complete genome sequence of the Gram-positive bacterium Bacillus subtilis.</title>
        <authorList>
            <person name="Kunst F."/>
            <person name="Ogasawara N."/>
            <person name="Moszer I."/>
            <person name="Albertini A.M."/>
            <person name="Alloni G."/>
            <person name="Azevedo V."/>
            <person name="Bertero M.G."/>
            <person name="Bessieres P."/>
            <person name="Bolotin A."/>
            <person name="Borchert S."/>
            <person name="Borriss R."/>
            <person name="Boursier L."/>
            <person name="Brans A."/>
            <person name="Braun M."/>
            <person name="Brignell S.C."/>
            <person name="Bron S."/>
            <person name="Brouillet S."/>
            <person name="Bruschi C.V."/>
            <person name="Caldwell B."/>
            <person name="Capuano V."/>
            <person name="Carter N.M."/>
            <person name="Choi S.-K."/>
            <person name="Codani J.-J."/>
            <person name="Connerton I.F."/>
            <person name="Cummings N.J."/>
            <person name="Daniel R.A."/>
            <person name="Denizot F."/>
            <person name="Devine K.M."/>
            <person name="Duesterhoeft A."/>
            <person name="Ehrlich S.D."/>
            <person name="Emmerson P.T."/>
            <person name="Entian K.-D."/>
            <person name="Errington J."/>
            <person name="Fabret C."/>
            <person name="Ferrari E."/>
            <person name="Foulger D."/>
            <person name="Fritz C."/>
            <person name="Fujita M."/>
            <person name="Fujita Y."/>
            <person name="Fuma S."/>
            <person name="Galizzi A."/>
            <person name="Galleron N."/>
            <person name="Ghim S.-Y."/>
            <person name="Glaser P."/>
            <person name="Goffeau A."/>
            <person name="Golightly E.J."/>
            <person name="Grandi G."/>
            <person name="Guiseppi G."/>
            <person name="Guy B.J."/>
            <person name="Haga K."/>
            <person name="Haiech J."/>
            <person name="Harwood C.R."/>
            <person name="Henaut A."/>
            <person name="Hilbert H."/>
            <person name="Holsappel S."/>
            <person name="Hosono S."/>
            <person name="Hullo M.-F."/>
            <person name="Itaya M."/>
            <person name="Jones L.-M."/>
            <person name="Joris B."/>
            <person name="Karamata D."/>
            <person name="Kasahara Y."/>
            <person name="Klaerr-Blanchard M."/>
            <person name="Klein C."/>
            <person name="Kobayashi Y."/>
            <person name="Koetter P."/>
            <person name="Koningstein G."/>
            <person name="Krogh S."/>
            <person name="Kumano M."/>
            <person name="Kurita K."/>
            <person name="Lapidus A."/>
            <person name="Lardinois S."/>
            <person name="Lauber J."/>
            <person name="Lazarevic V."/>
            <person name="Lee S.-M."/>
            <person name="Levine A."/>
            <person name="Liu H."/>
            <person name="Masuda S."/>
            <person name="Mauel C."/>
            <person name="Medigue C."/>
            <person name="Medina N."/>
            <person name="Mellado R.P."/>
            <person name="Mizuno M."/>
            <person name="Moestl D."/>
            <person name="Nakai S."/>
            <person name="Noback M."/>
            <person name="Noone D."/>
            <person name="O'Reilly M."/>
            <person name="Ogawa K."/>
            <person name="Ogiwara A."/>
            <person name="Oudega B."/>
            <person name="Park S.-H."/>
            <person name="Parro V."/>
            <person name="Pohl T.M."/>
            <person name="Portetelle D."/>
            <person name="Porwollik S."/>
            <person name="Prescott A.M."/>
            <person name="Presecan E."/>
            <person name="Pujic P."/>
            <person name="Purnelle B."/>
            <person name="Rapoport G."/>
            <person name="Rey M."/>
            <person name="Reynolds S."/>
            <person name="Rieger M."/>
            <person name="Rivolta C."/>
            <person name="Rocha E."/>
            <person name="Roche B."/>
            <person name="Rose M."/>
            <person name="Sadaie Y."/>
            <person name="Sato T."/>
            <person name="Scanlan E."/>
            <person name="Schleich S."/>
            <person name="Schroeter R."/>
            <person name="Scoffone F."/>
            <person name="Sekiguchi J."/>
            <person name="Sekowska A."/>
            <person name="Seror S.J."/>
            <person name="Serror P."/>
            <person name="Shin B.-S."/>
            <person name="Soldo B."/>
            <person name="Sorokin A."/>
            <person name="Tacconi E."/>
            <person name="Takagi T."/>
            <person name="Takahashi H."/>
            <person name="Takemaru K."/>
            <person name="Takeuchi M."/>
            <person name="Tamakoshi A."/>
            <person name="Tanaka T."/>
            <person name="Terpstra P."/>
            <person name="Tognoni A."/>
            <person name="Tosato V."/>
            <person name="Uchiyama S."/>
            <person name="Vandenbol M."/>
            <person name="Vannier F."/>
            <person name="Vassarotti A."/>
            <person name="Viari A."/>
            <person name="Wambutt R."/>
            <person name="Wedler E."/>
            <person name="Wedler H."/>
            <person name="Weitzenegger T."/>
            <person name="Winters P."/>
            <person name="Wipat A."/>
            <person name="Yamamoto H."/>
            <person name="Yamane K."/>
            <person name="Yasumoto K."/>
            <person name="Yata K."/>
            <person name="Yoshida K."/>
            <person name="Yoshikawa H.-F."/>
            <person name="Zumstein E."/>
            <person name="Yoshikawa H."/>
            <person name="Danchin A."/>
        </authorList>
    </citation>
    <scope>NUCLEOTIDE SEQUENCE [LARGE SCALE GENOMIC DNA]</scope>
    <source>
        <strain>168</strain>
    </source>
</reference>
<reference key="3">
    <citation type="journal article" date="2009" name="Microbiology">
        <title>From a consortium sequence to a unified sequence: the Bacillus subtilis 168 reference genome a decade later.</title>
        <authorList>
            <person name="Barbe V."/>
            <person name="Cruveiller S."/>
            <person name="Kunst F."/>
            <person name="Lenoble P."/>
            <person name="Meurice G."/>
            <person name="Sekowska A."/>
            <person name="Vallenet D."/>
            <person name="Wang T."/>
            <person name="Moszer I."/>
            <person name="Medigue C."/>
            <person name="Danchin A."/>
        </authorList>
    </citation>
    <scope>SEQUENCE REVISION TO 227</scope>
</reference>
<organism>
    <name type="scientific">Bacillus subtilis (strain 168)</name>
    <dbReference type="NCBI Taxonomy" id="224308"/>
    <lineage>
        <taxon>Bacteria</taxon>
        <taxon>Bacillati</taxon>
        <taxon>Bacillota</taxon>
        <taxon>Bacilli</taxon>
        <taxon>Bacillales</taxon>
        <taxon>Bacillaceae</taxon>
        <taxon>Bacillus</taxon>
    </lineage>
</organism>
<protein>
    <recommendedName>
        <fullName evidence="1">N5-carboxyaminoimidazole ribonucleotide synthase</fullName>
        <shortName evidence="1">N5-CAIR synthase</shortName>
        <ecNumber evidence="1">6.3.4.18</ecNumber>
    </recommendedName>
    <alternativeName>
        <fullName evidence="1">5-(carboxyamino)imidazole ribonucleotide synthetase</fullName>
    </alternativeName>
</protein>
<keyword id="KW-0067">ATP-binding</keyword>
<keyword id="KW-0436">Ligase</keyword>
<keyword id="KW-0547">Nucleotide-binding</keyword>
<keyword id="KW-0658">Purine biosynthesis</keyword>
<keyword id="KW-1185">Reference proteome</keyword>
<comment type="function">
    <text evidence="1">Catalyzes the ATP-dependent conversion of 5-aminoimidazole ribonucleotide (AIR) and HCO(3)(-) to N5-carboxyaminoimidazole ribonucleotide (N5-CAIR).</text>
</comment>
<comment type="catalytic activity">
    <reaction evidence="1">
        <text>5-amino-1-(5-phospho-beta-D-ribosyl)imidazole + hydrogencarbonate + ATP = 5-carboxyamino-1-(5-phospho-D-ribosyl)imidazole + ADP + phosphate + 2 H(+)</text>
        <dbReference type="Rhea" id="RHEA:19317"/>
        <dbReference type="ChEBI" id="CHEBI:15378"/>
        <dbReference type="ChEBI" id="CHEBI:17544"/>
        <dbReference type="ChEBI" id="CHEBI:30616"/>
        <dbReference type="ChEBI" id="CHEBI:43474"/>
        <dbReference type="ChEBI" id="CHEBI:58730"/>
        <dbReference type="ChEBI" id="CHEBI:137981"/>
        <dbReference type="ChEBI" id="CHEBI:456216"/>
        <dbReference type="EC" id="6.3.4.18"/>
    </reaction>
</comment>
<comment type="pathway">
    <text evidence="1">Purine metabolism; IMP biosynthesis via de novo pathway; 5-amino-1-(5-phospho-D-ribosyl)imidazole-4-carboxylate from 5-amino-1-(5-phospho-D-ribosyl)imidazole (N5-CAIR route): step 1/2.</text>
</comment>
<comment type="subunit">
    <text evidence="1">Homodimer.</text>
</comment>
<comment type="similarity">
    <text evidence="1">Belongs to the PurK/PurT family.</text>
</comment>
<sequence>MSKQIIYPGAVIGIIGGGQLGKMMAVSAKQMGYKVAVVDPVKDSPCGQVADVEITAHYNDREAIRKLAEISDIITYEFENIDYDALHWLKDHAYLPQGSELLLITQNRETEKKAIQSAGCEVAPYSIVKTKNELKQAVQELRLPAVLKTCRGGYDGKGQFVIKEEAQMEQAAALLEHGTCILESWVSFKMELSVIVVRSVNGEISTFPTAENIHHNNILFQSIVPARVEKGIQQKAADLAVKLADELNLVGPLAVEMFLTEDGELLVNELAPRPHNSGHYTLDLCETSQFEQHIRAVCGLPLGKTDLLKPGMMVNLLGDEVKLVEEDPELLKEAKLYIYGKHEIKKGRKMGHITFMKQPEDEWIQEITNKWMNRDGGQAE</sequence>
<proteinExistence type="inferred from homology"/>
<evidence type="ECO:0000255" key="1">
    <source>
        <dbReference type="HAMAP-Rule" id="MF_01928"/>
    </source>
</evidence>
<evidence type="ECO:0000305" key="2"/>
<name>PURK_BACSU</name>
<gene>
    <name evidence="1" type="primary">purK</name>
    <name type="ordered locus">BSU06430</name>
</gene>